<dbReference type="EMBL" id="EU168190">
    <property type="protein sequence ID" value="ABV66036.1"/>
    <property type="molecule type" value="Genomic_DNA"/>
</dbReference>
<dbReference type="RefSeq" id="YP_001936430.1">
    <property type="nucleotide sequence ID" value="NC_010772.1"/>
</dbReference>
<dbReference type="SMR" id="B2XTD8"/>
<dbReference type="GeneID" id="6335582"/>
<dbReference type="GO" id="GO:0009535">
    <property type="term" value="C:chloroplast thylakoid membrane"/>
    <property type="evidence" value="ECO:0007669"/>
    <property type="project" value="UniProtKB-SubCell"/>
</dbReference>
<dbReference type="GO" id="GO:0065002">
    <property type="term" value="P:intracellular protein transmembrane transport"/>
    <property type="evidence" value="ECO:0007669"/>
    <property type="project" value="UniProtKB-UniRule"/>
</dbReference>
<dbReference type="GO" id="GO:0006605">
    <property type="term" value="P:protein targeting"/>
    <property type="evidence" value="ECO:0007669"/>
    <property type="project" value="UniProtKB-UniRule"/>
</dbReference>
<dbReference type="Gene3D" id="1.10.3370.10">
    <property type="entry name" value="SecY subunit domain"/>
    <property type="match status" value="1"/>
</dbReference>
<dbReference type="HAMAP" id="MF_01465">
    <property type="entry name" value="SecY"/>
    <property type="match status" value="1"/>
</dbReference>
<dbReference type="InterPro" id="IPR026593">
    <property type="entry name" value="SecY"/>
</dbReference>
<dbReference type="InterPro" id="IPR002208">
    <property type="entry name" value="SecY/SEC61-alpha"/>
</dbReference>
<dbReference type="InterPro" id="IPR023201">
    <property type="entry name" value="SecY_dom_sf"/>
</dbReference>
<dbReference type="NCBIfam" id="TIGR00967">
    <property type="entry name" value="3a0501s007"/>
    <property type="match status" value="1"/>
</dbReference>
<dbReference type="PANTHER" id="PTHR10906">
    <property type="entry name" value="SECY/SEC61-ALPHA FAMILY MEMBER"/>
    <property type="match status" value="1"/>
</dbReference>
<dbReference type="Pfam" id="PF00344">
    <property type="entry name" value="SecY"/>
    <property type="match status" value="1"/>
</dbReference>
<dbReference type="PIRSF" id="PIRSF004557">
    <property type="entry name" value="SecY"/>
    <property type="match status" value="1"/>
</dbReference>
<dbReference type="PRINTS" id="PR00303">
    <property type="entry name" value="SECYTRNLCASE"/>
</dbReference>
<dbReference type="SUPFAM" id="SSF103491">
    <property type="entry name" value="Preprotein translocase SecY subunit"/>
    <property type="match status" value="1"/>
</dbReference>
<protein>
    <recommendedName>
        <fullName evidence="1">Protein translocase subunit SecY</fullName>
    </recommendedName>
</protein>
<name>SECY_HETA2</name>
<gene>
    <name evidence="1" type="primary">secY</name>
    <name type="ordered locus">Heak293_Cp129</name>
</gene>
<reference key="1">
    <citation type="journal article" date="2008" name="BMC Genomics">
        <title>Chloroplast genome sequencing analysis of Heterosigma akashiwo CCMP452 (West Atlantic) and NIES293 (West Pacific) strains.</title>
        <authorList>
            <person name="Cattolico R.A."/>
            <person name="Jacobs M.A."/>
            <person name="Zhou Y."/>
            <person name="Chang J."/>
            <person name="Duplessis M."/>
            <person name="Lybrand T."/>
            <person name="McKay J."/>
            <person name="Ong H.C."/>
            <person name="Sims E."/>
            <person name="Rocap G."/>
        </authorList>
    </citation>
    <scope>NUCLEOTIDE SEQUENCE [LARGE SCALE GENOMIC DNA]</scope>
</reference>
<evidence type="ECO:0000255" key="1">
    <source>
        <dbReference type="HAMAP-Rule" id="MF_01465"/>
    </source>
</evidence>
<proteinExistence type="inferred from homology"/>
<sequence length="454" mass="50963">MTLEKNKDSFTNIIDLSLINKEQKVTFTPTKEIYTELLKKRLLTIALLVFIIKIGMAIPLPYIDQTKLLNNATSMFDLSGPGLAAVSARASQKIGLFTLGITPSINASIILQLAFVINPNLKKLQREEGESGRRKLIKYTRYLTLLLAITQSVFLIFSLRAFIFEWSILKLFELSCVLSSGAMIILWISECITKTGITNGSSFLIFLNIVSVLPEQIGMSFKNLDIFSFEGLIVILTFSITVWAAIFLQQTLYIIPLKNPKLGQNELTKKLVEDSLYLPFRLNQAGVMPVVFASYLIPILKTGGIYILLKINSFNLFPFLIKFPEVVNQSLESIVEAGLICLFALFYSGLIIDPKDVADELQKSGFFIFAIRPGEKTRNYLEKIFKELSLIGALILAFNVVLLNLVGFVFNLSIFKGFSIGSQIILLGVVTEILQKVQALVLNDVYKRIRDRNK</sequence>
<feature type="chain" id="PRO_0000414217" description="Protein translocase subunit SecY">
    <location>
        <begin position="1"/>
        <end position="454"/>
    </location>
</feature>
<feature type="transmembrane region" description="Helical" evidence="1">
    <location>
        <begin position="43"/>
        <end position="63"/>
    </location>
</feature>
<feature type="transmembrane region" description="Helical" evidence="1">
    <location>
        <begin position="97"/>
        <end position="117"/>
    </location>
</feature>
<feature type="transmembrane region" description="Helical" evidence="1">
    <location>
        <begin position="144"/>
        <end position="164"/>
    </location>
</feature>
<feature type="transmembrane region" description="Helical" evidence="1">
    <location>
        <begin position="168"/>
        <end position="188"/>
    </location>
</feature>
<feature type="transmembrane region" description="Helical" evidence="1">
    <location>
        <begin position="201"/>
        <end position="221"/>
    </location>
</feature>
<feature type="transmembrane region" description="Helical" evidence="1">
    <location>
        <begin position="226"/>
        <end position="246"/>
    </location>
</feature>
<feature type="transmembrane region" description="Helical" evidence="1">
    <location>
        <begin position="289"/>
        <end position="309"/>
    </location>
</feature>
<feature type="transmembrane region" description="Helical" evidence="1">
    <location>
        <begin position="334"/>
        <end position="354"/>
    </location>
</feature>
<feature type="transmembrane region" description="Helical" evidence="1">
    <location>
        <begin position="390"/>
        <end position="410"/>
    </location>
</feature>
<feature type="transmembrane region" description="Helical" evidence="1">
    <location>
        <begin position="414"/>
        <end position="434"/>
    </location>
</feature>
<comment type="function">
    <text evidence="1">The central subunit of the protein translocation channel SecYE. Consists of two halves formed by TMs 1-5 and 6-10. These two domains form a lateral gate at the front which open onto the bilayer between TMs 2 and 7, and are clamped together by SecE at the back. The channel is closed by both a pore ring composed of hydrophobic SecY resides and a short helix (helix 2A) on the extracellular side of the membrane which forms a plug.</text>
</comment>
<comment type="subunit">
    <text evidence="1">Component of the plastid Sec protein translocase complex, which is composed of at least SecY and SecE.</text>
</comment>
<comment type="subcellular location">
    <subcellularLocation>
        <location evidence="1">Plastid</location>
        <location evidence="1">Chloroplast thylakoid membrane</location>
        <topology evidence="1">Multi-pass membrane protein</topology>
    </subcellularLocation>
</comment>
<comment type="similarity">
    <text evidence="1">Belongs to the SecY/SEC61-alpha family.</text>
</comment>
<keyword id="KW-0150">Chloroplast</keyword>
<keyword id="KW-0472">Membrane</keyword>
<keyword id="KW-0934">Plastid</keyword>
<keyword id="KW-0653">Protein transport</keyword>
<keyword id="KW-0793">Thylakoid</keyword>
<keyword id="KW-0811">Translocation</keyword>
<keyword id="KW-0812">Transmembrane</keyword>
<keyword id="KW-1133">Transmembrane helix</keyword>
<keyword id="KW-0813">Transport</keyword>
<organism>
    <name type="scientific">Heterosigma akashiwo (strain NIES-293 / 8280G21-1)</name>
    <dbReference type="NCBI Taxonomy" id="536047"/>
    <lineage>
        <taxon>Eukaryota</taxon>
        <taxon>Sar</taxon>
        <taxon>Stramenopiles</taxon>
        <taxon>Ochrophyta</taxon>
        <taxon>Raphidophyceae</taxon>
        <taxon>Chattonellales</taxon>
        <taxon>Chattonellaceae</taxon>
        <taxon>Heterosigma</taxon>
    </lineage>
</organism>
<accession>B2XTD8</accession>
<geneLocation type="chloroplast"/>